<feature type="chain" id="PRO_0000398590" description="Histidine kinase 5">
    <location>
        <begin position="1"/>
        <end position="922"/>
    </location>
</feature>
<feature type="domain" description="Histidine kinase" evidence="2">
    <location>
        <begin position="373"/>
        <end position="614"/>
    </location>
</feature>
<feature type="domain" description="Response regulatory" evidence="3">
    <location>
        <begin position="779"/>
        <end position="921"/>
    </location>
</feature>
<feature type="region of interest" description="Disordered" evidence="4">
    <location>
        <begin position="620"/>
        <end position="639"/>
    </location>
</feature>
<feature type="region of interest" description="Disordered" evidence="4">
    <location>
        <begin position="728"/>
        <end position="773"/>
    </location>
</feature>
<feature type="coiled-coil region" evidence="1">
    <location>
        <begin position="86"/>
        <end position="120"/>
    </location>
</feature>
<feature type="coiled-coil region" evidence="1">
    <location>
        <begin position="169"/>
        <end position="205"/>
    </location>
</feature>
<feature type="compositionally biased region" description="Low complexity" evidence="4">
    <location>
        <begin position="738"/>
        <end position="747"/>
    </location>
</feature>
<feature type="compositionally biased region" description="Basic and acidic residues" evidence="4">
    <location>
        <begin position="761"/>
        <end position="773"/>
    </location>
</feature>
<feature type="binding site">
    <location>
        <position position="785"/>
    </location>
    <ligand>
        <name>Mg(2+)</name>
        <dbReference type="ChEBI" id="CHEBI:18420"/>
    </ligand>
</feature>
<feature type="binding site">
    <location>
        <position position="828"/>
    </location>
    <ligand>
        <name>Mg(2+)</name>
        <dbReference type="ChEBI" id="CHEBI:18420"/>
    </ligand>
</feature>
<feature type="binding site">
    <location>
        <position position="830"/>
    </location>
    <ligand>
        <name>Mg(2+)</name>
        <dbReference type="ChEBI" id="CHEBI:18420"/>
    </ligand>
</feature>
<feature type="modified residue" description="Phosphohistidine; by autocatalysis" evidence="2">
    <location>
        <position position="376"/>
    </location>
</feature>
<feature type="modified residue" description="4-aspartylphosphate" evidence="11">
    <location>
        <position position="828"/>
    </location>
</feature>
<feature type="strand" evidence="12">
    <location>
        <begin position="780"/>
        <end position="783"/>
    </location>
</feature>
<feature type="helix" evidence="12">
    <location>
        <begin position="787"/>
        <end position="799"/>
    </location>
</feature>
<feature type="strand" evidence="12">
    <location>
        <begin position="805"/>
        <end position="809"/>
    </location>
</feature>
<feature type="helix" evidence="12">
    <location>
        <begin position="810"/>
        <end position="819"/>
    </location>
</feature>
<feature type="strand" evidence="12">
    <location>
        <begin position="823"/>
        <end position="830"/>
    </location>
</feature>
<feature type="strand" evidence="12">
    <location>
        <begin position="832"/>
        <end position="834"/>
    </location>
</feature>
<feature type="helix" evidence="12">
    <location>
        <begin position="836"/>
        <end position="849"/>
    </location>
</feature>
<feature type="helix" evidence="12">
    <location>
        <begin position="853"/>
        <end position="857"/>
    </location>
</feature>
<feature type="strand" evidence="12">
    <location>
        <begin position="880"/>
        <end position="884"/>
    </location>
</feature>
<feature type="helix" evidence="12">
    <location>
        <begin position="888"/>
        <end position="890"/>
    </location>
</feature>
<feature type="helix" evidence="12">
    <location>
        <begin position="892"/>
        <end position="897"/>
    </location>
</feature>
<feature type="strand" evidence="12">
    <location>
        <begin position="901"/>
        <end position="907"/>
    </location>
</feature>
<feature type="helix" evidence="12">
    <location>
        <begin position="910"/>
        <end position="920"/>
    </location>
</feature>
<proteinExistence type="evidence at protein level"/>
<organism>
    <name type="scientific">Arabidopsis thaliana</name>
    <name type="common">Mouse-ear cress</name>
    <dbReference type="NCBI Taxonomy" id="3702"/>
    <lineage>
        <taxon>Eukaryota</taxon>
        <taxon>Viridiplantae</taxon>
        <taxon>Streptophyta</taxon>
        <taxon>Embryophyta</taxon>
        <taxon>Tracheophyta</taxon>
        <taxon>Spermatophyta</taxon>
        <taxon>Magnoliopsida</taxon>
        <taxon>eudicotyledons</taxon>
        <taxon>Gunneridae</taxon>
        <taxon>Pentapetalae</taxon>
        <taxon>rosids</taxon>
        <taxon>malvids</taxon>
        <taxon>Brassicales</taxon>
        <taxon>Brassicaceae</taxon>
        <taxon>Camelineae</taxon>
        <taxon>Arabidopsis</taxon>
    </lineage>
</organism>
<reference key="1">
    <citation type="submission" date="2005-08" db="EMBL/GenBank/DDBJ databases">
        <title>Cytokinin independent 2 is an intracellular histidine kinase modulating cytokinin-dependent growth.</title>
        <authorList>
            <person name="Meister R.J."/>
            <person name="Sivasankar S."/>
        </authorList>
    </citation>
    <scope>NUCLEOTIDE SEQUENCE [MRNA]</scope>
</reference>
<reference key="2">
    <citation type="journal article" date="2000" name="Nature">
        <title>Sequence and analysis of chromosome 5 of the plant Arabidopsis thaliana.</title>
        <authorList>
            <person name="Tabata S."/>
            <person name="Kaneko T."/>
            <person name="Nakamura Y."/>
            <person name="Kotani H."/>
            <person name="Kato T."/>
            <person name="Asamizu E."/>
            <person name="Miyajima N."/>
            <person name="Sasamoto S."/>
            <person name="Kimura T."/>
            <person name="Hosouchi T."/>
            <person name="Kawashima K."/>
            <person name="Kohara M."/>
            <person name="Matsumoto M."/>
            <person name="Matsuno A."/>
            <person name="Muraki A."/>
            <person name="Nakayama S."/>
            <person name="Nakazaki N."/>
            <person name="Naruo K."/>
            <person name="Okumura S."/>
            <person name="Shinpo S."/>
            <person name="Takeuchi C."/>
            <person name="Wada T."/>
            <person name="Watanabe A."/>
            <person name="Yamada M."/>
            <person name="Yasuda M."/>
            <person name="Sato S."/>
            <person name="de la Bastide M."/>
            <person name="Huang E."/>
            <person name="Spiegel L."/>
            <person name="Gnoj L."/>
            <person name="O'Shaughnessy A."/>
            <person name="Preston R."/>
            <person name="Habermann K."/>
            <person name="Murray J."/>
            <person name="Johnson D."/>
            <person name="Rohlfing T."/>
            <person name="Nelson J."/>
            <person name="Stoneking T."/>
            <person name="Pepin K."/>
            <person name="Spieth J."/>
            <person name="Sekhon M."/>
            <person name="Armstrong J."/>
            <person name="Becker M."/>
            <person name="Belter E."/>
            <person name="Cordum H."/>
            <person name="Cordes M."/>
            <person name="Courtney L."/>
            <person name="Courtney W."/>
            <person name="Dante M."/>
            <person name="Du H."/>
            <person name="Edwards J."/>
            <person name="Fryman J."/>
            <person name="Haakensen B."/>
            <person name="Lamar E."/>
            <person name="Latreille P."/>
            <person name="Leonard S."/>
            <person name="Meyer R."/>
            <person name="Mulvaney E."/>
            <person name="Ozersky P."/>
            <person name="Riley A."/>
            <person name="Strowmatt C."/>
            <person name="Wagner-McPherson C."/>
            <person name="Wollam A."/>
            <person name="Yoakum M."/>
            <person name="Bell M."/>
            <person name="Dedhia N."/>
            <person name="Parnell L."/>
            <person name="Shah R."/>
            <person name="Rodriguez M."/>
            <person name="Hoon See L."/>
            <person name="Vil D."/>
            <person name="Baker J."/>
            <person name="Kirchoff K."/>
            <person name="Toth K."/>
            <person name="King L."/>
            <person name="Bahret A."/>
            <person name="Miller B."/>
            <person name="Marra M.A."/>
            <person name="Martienssen R."/>
            <person name="McCombie W.R."/>
            <person name="Wilson R.K."/>
            <person name="Murphy G."/>
            <person name="Bancroft I."/>
            <person name="Volckaert G."/>
            <person name="Wambutt R."/>
            <person name="Duesterhoeft A."/>
            <person name="Stiekema W."/>
            <person name="Pohl T."/>
            <person name="Entian K.-D."/>
            <person name="Terryn N."/>
            <person name="Hartley N."/>
            <person name="Bent E."/>
            <person name="Johnson S."/>
            <person name="Langham S.-A."/>
            <person name="McCullagh B."/>
            <person name="Robben J."/>
            <person name="Grymonprez B."/>
            <person name="Zimmermann W."/>
            <person name="Ramsperger U."/>
            <person name="Wedler H."/>
            <person name="Balke K."/>
            <person name="Wedler E."/>
            <person name="Peters S."/>
            <person name="van Staveren M."/>
            <person name="Dirkse W."/>
            <person name="Mooijman P."/>
            <person name="Klein Lankhorst R."/>
            <person name="Weitzenegger T."/>
            <person name="Bothe G."/>
            <person name="Rose M."/>
            <person name="Hauf J."/>
            <person name="Berneiser S."/>
            <person name="Hempel S."/>
            <person name="Feldpausch M."/>
            <person name="Lamberth S."/>
            <person name="Villarroel R."/>
            <person name="Gielen J."/>
            <person name="Ardiles W."/>
            <person name="Bents O."/>
            <person name="Lemcke K."/>
            <person name="Kolesov G."/>
            <person name="Mayer K.F.X."/>
            <person name="Rudd S."/>
            <person name="Schoof H."/>
            <person name="Schueller C."/>
            <person name="Zaccaria P."/>
            <person name="Mewes H.-W."/>
            <person name="Bevan M."/>
            <person name="Fransz P.F."/>
        </authorList>
    </citation>
    <scope>NUCLEOTIDE SEQUENCE [LARGE SCALE GENOMIC DNA]</scope>
    <source>
        <strain>cv. Columbia</strain>
    </source>
</reference>
<reference key="3">
    <citation type="journal article" date="2017" name="Plant J.">
        <title>Araport11: a complete reannotation of the Arabidopsis thaliana reference genome.</title>
        <authorList>
            <person name="Cheng C.Y."/>
            <person name="Krishnakumar V."/>
            <person name="Chan A.P."/>
            <person name="Thibaud-Nissen F."/>
            <person name="Schobel S."/>
            <person name="Town C.D."/>
        </authorList>
    </citation>
    <scope>GENOME REANNOTATION</scope>
    <source>
        <strain>cv. Columbia</strain>
    </source>
</reference>
<reference key="4">
    <citation type="journal article" date="2007" name="Plant Cell Physiol.">
        <title>AHK5 histidine kinase regulates root elongation through an ETR1-dependent abscisic acid and ethylene signaling pathway in Arabidopsis thaliana.</title>
        <authorList>
            <person name="Iwama A."/>
            <person name="Yamashino T."/>
            <person name="Tanaka Y."/>
            <person name="Sakakibara H."/>
            <person name="Kakimoto T."/>
            <person name="Sato S."/>
            <person name="Kato T."/>
            <person name="Tabata S."/>
            <person name="Nagatani A."/>
            <person name="Mizuno T."/>
        </authorList>
    </citation>
    <scope>FUNCTION</scope>
    <scope>DISRUPTION PHENOTYPE</scope>
    <scope>TISSUE SPECIFICITY</scope>
</reference>
<reference key="5">
    <citation type="journal article" date="2007" name="Proc. Natl. Acad. Sci. U.S.A.">
        <title>Functional analysis of AHK1/ATHK1 and cytokinin receptor histidine kinases in response to abscisic acid, drought, and salt stress in Arabidopsis.</title>
        <authorList>
            <person name="Tran L.S."/>
            <person name="Urao T."/>
            <person name="Qin F."/>
            <person name="Maruyama K."/>
            <person name="Kakimoto T."/>
            <person name="Shinozaki K."/>
            <person name="Yamaguchi-Shinozaki K."/>
        </authorList>
    </citation>
    <scope>FUNCTION</scope>
</reference>
<reference key="6">
    <citation type="journal article" date="2008" name="PLoS ONE">
        <title>The histidine kinase AHK5 integrates endogenous and environmental signals in Arabidopsis guard cells.</title>
        <authorList>
            <person name="Desikan R."/>
            <person name="Horak J."/>
            <person name="Chaban C."/>
            <person name="Mira-Rodado V."/>
            <person name="Witthoeft J."/>
            <person name="Elgass K."/>
            <person name="Grefen C."/>
            <person name="Cheung M.-K."/>
            <person name="Meixner A.J."/>
            <person name="Hooley R."/>
            <person name="Neill S.J."/>
            <person name="Hancock J.T."/>
            <person name="Harter K."/>
        </authorList>
    </citation>
    <scope>FUNCTION</scope>
    <scope>TISSUE SPECIFICITY</scope>
    <scope>SUBCELLULAR LOCATION</scope>
    <scope>DISRUPTION PHENOTYPE</scope>
    <scope>INDUCTION BY HYDROGEN PEROXIDE</scope>
</reference>
<reference key="7">
    <citation type="journal article" date="2012" name="New Phytol.">
        <title>Arabidopsis histidine kinase 5 regulates salt sensitivity and resistance against bacterial and fungal infection.</title>
        <authorList>
            <person name="Pham J."/>
            <person name="Liu J."/>
            <person name="Bennett M.H."/>
            <person name="Mansfield J.W."/>
            <person name="Desikan R."/>
        </authorList>
    </citation>
    <scope>FUNCTION</scope>
    <scope>DISRUPTION PHENOTYPE</scope>
</reference>
<reference key="8">
    <citation type="journal article" date="2012" name="Plant Signal. Behav.">
        <title>Modulation of ROS production and hormone levels by AHK5 during abiotic and biotic stress signaling.</title>
        <authorList>
            <person name="Pham J."/>
            <person name="Desikan R."/>
        </authorList>
    </citation>
    <scope>FUNCTION</scope>
</reference>
<reference key="9">
    <citation type="journal article" date="2013" name="Mol. Plant">
        <title>Structure-function analysis of Arabidopsis thaliana histidine kinase AHK5 bound to its cognate phosphotransfer protein AHP1.</title>
        <authorList>
            <person name="Bauer J."/>
            <person name="Reiss K."/>
            <person name="Veerabagu M."/>
            <person name="Heunemann M."/>
            <person name="Harter K."/>
            <person name="Stehle T."/>
        </authorList>
    </citation>
    <scope>X-RAY CRYSTALLOGRAPHY (1.95 ANGSTROMS) IN COMPLEX WITH AHP1</scope>
    <scope>INTERACTION WITH AHP1; APH2; APH3; APH5 AND APH6</scope>
</reference>
<evidence type="ECO:0000255" key="1"/>
<evidence type="ECO:0000255" key="2">
    <source>
        <dbReference type="PROSITE-ProRule" id="PRU00107"/>
    </source>
</evidence>
<evidence type="ECO:0000255" key="3">
    <source>
        <dbReference type="PROSITE-ProRule" id="PRU00169"/>
    </source>
</evidence>
<evidence type="ECO:0000256" key="4">
    <source>
        <dbReference type="SAM" id="MobiDB-lite"/>
    </source>
</evidence>
<evidence type="ECO:0000269" key="5">
    <source>
    </source>
</evidence>
<evidence type="ECO:0000269" key="6">
    <source>
    </source>
</evidence>
<evidence type="ECO:0000269" key="7">
    <source>
    </source>
</evidence>
<evidence type="ECO:0000269" key="8">
    <source>
    </source>
</evidence>
<evidence type="ECO:0000269" key="9">
    <source>
    </source>
</evidence>
<evidence type="ECO:0000269" key="10">
    <source>
    </source>
</evidence>
<evidence type="ECO:0000305" key="11"/>
<evidence type="ECO:0007829" key="12">
    <source>
        <dbReference type="PDB" id="4EUK"/>
    </source>
</evidence>
<gene>
    <name type="primary">AHK5</name>
    <name type="synonym">CKI2</name>
    <name type="ordered locus">At5g10720</name>
    <name type="ORF">MAJ23.80</name>
</gene>
<dbReference type="EC" id="2.7.13.3"/>
<dbReference type="EMBL" id="DQ167579">
    <property type="protein sequence ID" value="AAZ98829.1"/>
    <property type="molecule type" value="mRNA"/>
</dbReference>
<dbReference type="EMBL" id="AL392144">
    <property type="protein sequence ID" value="CAC08246.1"/>
    <property type="status" value="ALT_SEQ"/>
    <property type="molecule type" value="Genomic_DNA"/>
</dbReference>
<dbReference type="EMBL" id="CP002688">
    <property type="protein sequence ID" value="AED91588.1"/>
    <property type="molecule type" value="Genomic_DNA"/>
</dbReference>
<dbReference type="RefSeq" id="NP_196633.2">
    <property type="nucleotide sequence ID" value="NM_121110.2"/>
</dbReference>
<dbReference type="PDB" id="4EUK">
    <property type="method" value="X-ray"/>
    <property type="resolution" value="1.95 A"/>
    <property type="chains" value="A=774-922"/>
</dbReference>
<dbReference type="PDBsum" id="4EUK"/>
<dbReference type="SMR" id="Q3S4A7"/>
<dbReference type="BioGRID" id="16216">
    <property type="interactions" value="6"/>
</dbReference>
<dbReference type="FunCoup" id="Q3S4A7">
    <property type="interactions" value="23"/>
</dbReference>
<dbReference type="STRING" id="3702.Q3S4A7"/>
<dbReference type="iPTMnet" id="Q3S4A7"/>
<dbReference type="PaxDb" id="3702-AT5G10720.1"/>
<dbReference type="ProteomicsDB" id="244785"/>
<dbReference type="EnsemblPlants" id="AT5G10720.1">
    <property type="protein sequence ID" value="AT5G10720.1"/>
    <property type="gene ID" value="AT5G10720"/>
</dbReference>
<dbReference type="GeneID" id="830938"/>
<dbReference type="Gramene" id="AT5G10720.1">
    <property type="protein sequence ID" value="AT5G10720.1"/>
    <property type="gene ID" value="AT5G10720"/>
</dbReference>
<dbReference type="KEGG" id="ath:AT5G10720"/>
<dbReference type="Araport" id="AT5G10720"/>
<dbReference type="TAIR" id="AT5G10720">
    <property type="gene designation" value="HK5"/>
</dbReference>
<dbReference type="eggNOG" id="KOG0519">
    <property type="taxonomic scope" value="Eukaryota"/>
</dbReference>
<dbReference type="HOGENOM" id="CLU_000445_104_17_1"/>
<dbReference type="InParanoid" id="Q3S4A7"/>
<dbReference type="OMA" id="HEDACQT"/>
<dbReference type="OrthoDB" id="10266508at2759"/>
<dbReference type="PhylomeDB" id="Q3S4A7"/>
<dbReference type="BRENDA" id="2.7.13.3">
    <property type="organism ID" value="399"/>
</dbReference>
<dbReference type="EvolutionaryTrace" id="Q3S4A7"/>
<dbReference type="PRO" id="PR:Q3S4A7"/>
<dbReference type="Proteomes" id="UP000006548">
    <property type="component" value="Chromosome 5"/>
</dbReference>
<dbReference type="ExpressionAtlas" id="Q3S4A7">
    <property type="expression patterns" value="baseline and differential"/>
</dbReference>
<dbReference type="GO" id="GO:0005737">
    <property type="term" value="C:cytoplasm"/>
    <property type="evidence" value="ECO:0000314"/>
    <property type="project" value="UniProtKB"/>
</dbReference>
<dbReference type="GO" id="GO:0000325">
    <property type="term" value="C:plant-type vacuole"/>
    <property type="evidence" value="ECO:0007005"/>
    <property type="project" value="TAIR"/>
</dbReference>
<dbReference type="GO" id="GO:0005886">
    <property type="term" value="C:plasma membrane"/>
    <property type="evidence" value="ECO:0000314"/>
    <property type="project" value="UniProtKB"/>
</dbReference>
<dbReference type="GO" id="GO:0046872">
    <property type="term" value="F:metal ion binding"/>
    <property type="evidence" value="ECO:0007669"/>
    <property type="project" value="UniProtKB-KW"/>
</dbReference>
<dbReference type="GO" id="GO:0000155">
    <property type="term" value="F:phosphorelay sensor kinase activity"/>
    <property type="evidence" value="ECO:0007669"/>
    <property type="project" value="InterPro"/>
</dbReference>
<dbReference type="GO" id="GO:0004673">
    <property type="term" value="F:protein histidine kinase activity"/>
    <property type="evidence" value="ECO:0000314"/>
    <property type="project" value="UniProtKB"/>
</dbReference>
<dbReference type="GO" id="GO:0009738">
    <property type="term" value="P:abscisic acid-activated signaling pathway"/>
    <property type="evidence" value="ECO:0007669"/>
    <property type="project" value="UniProtKB-KW"/>
</dbReference>
<dbReference type="GO" id="GO:0070301">
    <property type="term" value="P:cellular response to hydrogen peroxide"/>
    <property type="evidence" value="ECO:0000315"/>
    <property type="project" value="UniProtKB"/>
</dbReference>
<dbReference type="GO" id="GO:0071219">
    <property type="term" value="P:cellular response to molecule of bacterial origin"/>
    <property type="evidence" value="ECO:0000315"/>
    <property type="project" value="UniProtKB"/>
</dbReference>
<dbReference type="GO" id="GO:0071732">
    <property type="term" value="P:cellular response to nitric oxide"/>
    <property type="evidence" value="ECO:0000315"/>
    <property type="project" value="UniProtKB"/>
</dbReference>
<dbReference type="GO" id="GO:0009736">
    <property type="term" value="P:cytokinin-activated signaling pathway"/>
    <property type="evidence" value="ECO:0000304"/>
    <property type="project" value="TAIR"/>
</dbReference>
<dbReference type="GO" id="GO:0006952">
    <property type="term" value="P:defense response"/>
    <property type="evidence" value="ECO:0007669"/>
    <property type="project" value="UniProtKB-KW"/>
</dbReference>
<dbReference type="GO" id="GO:0009873">
    <property type="term" value="P:ethylene-activated signaling pathway"/>
    <property type="evidence" value="ECO:0007669"/>
    <property type="project" value="UniProtKB-KW"/>
</dbReference>
<dbReference type="GO" id="GO:0009788">
    <property type="term" value="P:negative regulation of abscisic acid-activated signaling pathway"/>
    <property type="evidence" value="ECO:0000315"/>
    <property type="project" value="UniProtKB"/>
</dbReference>
<dbReference type="GO" id="GO:0010105">
    <property type="term" value="P:negative regulation of ethylene-activated signaling pathway"/>
    <property type="evidence" value="ECO:0000315"/>
    <property type="project" value="UniProtKB"/>
</dbReference>
<dbReference type="GO" id="GO:0090333">
    <property type="term" value="P:regulation of stomatal closure"/>
    <property type="evidence" value="ECO:0000315"/>
    <property type="project" value="UniProtKB"/>
</dbReference>
<dbReference type="GO" id="GO:0048364">
    <property type="term" value="P:root development"/>
    <property type="evidence" value="ECO:0000315"/>
    <property type="project" value="UniProtKB"/>
</dbReference>
<dbReference type="CDD" id="cd16922">
    <property type="entry name" value="HATPase_EvgS-ArcB-TorS-like"/>
    <property type="match status" value="1"/>
</dbReference>
<dbReference type="CDD" id="cd00082">
    <property type="entry name" value="HisKA"/>
    <property type="match status" value="1"/>
</dbReference>
<dbReference type="CDD" id="cd17546">
    <property type="entry name" value="REC_hyHK_CKI1_RcsC-like"/>
    <property type="match status" value="1"/>
</dbReference>
<dbReference type="FunFam" id="3.30.450.20:FF:000061">
    <property type="entry name" value="Histidine kinase 5"/>
    <property type="match status" value="1"/>
</dbReference>
<dbReference type="FunFam" id="3.40.50.2300:FF:000201">
    <property type="entry name" value="Histidine kinase 5"/>
    <property type="match status" value="1"/>
</dbReference>
<dbReference type="FunFam" id="3.30.565.10:FF:000069">
    <property type="entry name" value="Probable histidine kinase 1"/>
    <property type="match status" value="1"/>
</dbReference>
<dbReference type="FunFam" id="1.10.287.130:FF:000030">
    <property type="entry name" value="Putative histidine kinase 5"/>
    <property type="match status" value="1"/>
</dbReference>
<dbReference type="Gene3D" id="1.10.287.130">
    <property type="match status" value="1"/>
</dbReference>
<dbReference type="Gene3D" id="3.40.50.2300">
    <property type="match status" value="1"/>
</dbReference>
<dbReference type="Gene3D" id="3.30.565.10">
    <property type="entry name" value="Histidine kinase-like ATPase, C-terminal domain"/>
    <property type="match status" value="1"/>
</dbReference>
<dbReference type="Gene3D" id="3.30.450.20">
    <property type="entry name" value="PAS domain"/>
    <property type="match status" value="1"/>
</dbReference>
<dbReference type="InterPro" id="IPR011006">
    <property type="entry name" value="CheY-like_superfamily"/>
</dbReference>
<dbReference type="InterPro" id="IPR036890">
    <property type="entry name" value="HATPase_C_sf"/>
</dbReference>
<dbReference type="InterPro" id="IPR005467">
    <property type="entry name" value="His_kinase_dom"/>
</dbReference>
<dbReference type="InterPro" id="IPR003661">
    <property type="entry name" value="HisK_dim/P_dom"/>
</dbReference>
<dbReference type="InterPro" id="IPR036097">
    <property type="entry name" value="HisK_dim/P_sf"/>
</dbReference>
<dbReference type="InterPro" id="IPR035965">
    <property type="entry name" value="PAS-like_dom_sf"/>
</dbReference>
<dbReference type="InterPro" id="IPR004358">
    <property type="entry name" value="Sig_transdc_His_kin-like_C"/>
</dbReference>
<dbReference type="InterPro" id="IPR001789">
    <property type="entry name" value="Sig_transdc_resp-reg_receiver"/>
</dbReference>
<dbReference type="PANTHER" id="PTHR43047:SF68">
    <property type="entry name" value="HISTIDINE KINASE 5"/>
    <property type="match status" value="1"/>
</dbReference>
<dbReference type="PANTHER" id="PTHR43047">
    <property type="entry name" value="TWO-COMPONENT HISTIDINE PROTEIN KINASE"/>
    <property type="match status" value="1"/>
</dbReference>
<dbReference type="Pfam" id="PF02518">
    <property type="entry name" value="HATPase_c"/>
    <property type="match status" value="1"/>
</dbReference>
<dbReference type="Pfam" id="PF00512">
    <property type="entry name" value="HisKA"/>
    <property type="match status" value="1"/>
</dbReference>
<dbReference type="Pfam" id="PF00072">
    <property type="entry name" value="Response_reg"/>
    <property type="match status" value="1"/>
</dbReference>
<dbReference type="PRINTS" id="PR00344">
    <property type="entry name" value="BCTRLSENSOR"/>
</dbReference>
<dbReference type="SMART" id="SM00387">
    <property type="entry name" value="HATPase_c"/>
    <property type="match status" value="1"/>
</dbReference>
<dbReference type="SMART" id="SM00388">
    <property type="entry name" value="HisKA"/>
    <property type="match status" value="1"/>
</dbReference>
<dbReference type="SMART" id="SM00448">
    <property type="entry name" value="REC"/>
    <property type="match status" value="1"/>
</dbReference>
<dbReference type="SUPFAM" id="SSF55874">
    <property type="entry name" value="ATPase domain of HSP90 chaperone/DNA topoisomerase II/histidine kinase"/>
    <property type="match status" value="1"/>
</dbReference>
<dbReference type="SUPFAM" id="SSF52172">
    <property type="entry name" value="CheY-like"/>
    <property type="match status" value="1"/>
</dbReference>
<dbReference type="SUPFAM" id="SSF47384">
    <property type="entry name" value="Homodimeric domain of signal transducing histidine kinase"/>
    <property type="match status" value="1"/>
</dbReference>
<dbReference type="SUPFAM" id="SSF55785">
    <property type="entry name" value="PYP-like sensor domain (PAS domain)"/>
    <property type="match status" value="1"/>
</dbReference>
<dbReference type="PROSITE" id="PS50109">
    <property type="entry name" value="HIS_KIN"/>
    <property type="match status" value="1"/>
</dbReference>
<dbReference type="PROSITE" id="PS50110">
    <property type="entry name" value="RESPONSE_REGULATORY"/>
    <property type="match status" value="1"/>
</dbReference>
<accession>Q3S4A7</accession>
<accession>Q9FT60</accession>
<sequence>MVCEMETDQIEEMDVEVLSSMWPEDVGTEADKQFNVEKPAGDLDTLKEVTIETRTIADMTRLPNLLNSTHQGSSQLTNLVKQWEYMQDNAVRLLKEELKNLDRQREEAEAKELKIIEEYKFESNEPENVPVLDETSDLFRRFRQKKRDALVDSKKIEIYEEFDTVAYWKQKALSLEKMLEASTERERRLMEKLSESLKTMESQSAPVQELTQNLKRAEGFLHFILQNAPIVMGHQDKDLRYLFIYNKYPSLREQDILGKTDVEIFHGGGVKESEDFKREVLEKGKASKREITFTTDLFGSKTFLIYVEPVYNKAGEKIGINYMGMEVTDQVVKREKMAKLREDNAVRKAMESELNKTIHITEETMRAKQMLATMSHEIRSPLSGVVGMAEILSTTKLDKEQRQLLNVMISSGDLVLQLINDILDLSKVESGVMRLEATKFRPREVVKHVLQTAAASLKKSLTLEGNIADDVPIEVVGDVLRIRQILTNLISNAIKFTHEGNVGIKLQVISEPSFVRDNALNADTEEHEQNGLTETSVWICCDVWDTGIGIPENALPCLFKKYMQASADHARKYGGTGLGLAICKQLVELMGGQLTVTSRVSEGSTFTFILPYKVGRSDDYSDDQDEFSDMADQQSEPDDTAEGYFQFKPLLGSIYSNGGPGISNDFLPHKVMLTSPIKLINGFVADPSNNTGQSEMLQLENGGYMDESKLETSSGHCPESAHQYENGNGRCFSKESESCSSSQASSEGGTLEMESELTVSSHREEEKAETEVKETSKPKILLVEDNKINIMVAKSMMKQLGHTMDIANNGVEAITAINSSSYDLVLMDVCMPVLDGLKATRLIRSYEETGNWNAAIEAGVDISTSENEQVCMRPTNRLPIIAMTANTLAESSEECYANGMDSFISKPVTLQKLRECLQQYLH</sequence>
<protein>
    <recommendedName>
        <fullName>Histidine kinase 5</fullName>
        <ecNumber>2.7.13.3</ecNumber>
    </recommendedName>
    <alternativeName>
        <fullName>Arabidopsis histidine kinase 5</fullName>
        <shortName>AtHK5</shortName>
    </alternativeName>
    <alternativeName>
        <fullName>Protein AUTHENTIC HIS-KINASE 5</fullName>
    </alternativeName>
    <alternativeName>
        <fullName>Protein CYTOKININ-INDEPENDENT 2</fullName>
    </alternativeName>
</protein>
<name>AHK5_ARATH</name>
<keyword id="KW-0002">3D-structure</keyword>
<keyword id="KW-0938">Abscisic acid signaling pathway</keyword>
<keyword id="KW-1003">Cell membrane</keyword>
<keyword id="KW-0175">Coiled coil</keyword>
<keyword id="KW-0963">Cytoplasm</keyword>
<keyword id="KW-0217">Developmental protein</keyword>
<keyword id="KW-0936">Ethylene signaling pathway</keyword>
<keyword id="KW-0418">Kinase</keyword>
<keyword id="KW-0460">Magnesium</keyword>
<keyword id="KW-0472">Membrane</keyword>
<keyword id="KW-0479">Metal-binding</keyword>
<keyword id="KW-0597">Phosphoprotein</keyword>
<keyword id="KW-0611">Plant defense</keyword>
<keyword id="KW-1185">Reference proteome</keyword>
<keyword id="KW-0808">Transferase</keyword>
<comment type="function">
    <text evidence="5 6 7 8 9">Functions as a histidine kinase and transmits the stress signal to a downstream MAPK cascade. This protein undergoes an ATP-dependent autophosphorylation at a conserved histidine residue in the kinase core, and a phosphoryl group is then transferred to a conserved aspartate residue in the receiver domain. Negative regulator of the ETR1-dependent abscisic acid (ABA) and ethylene signaling pathway that inhibits the root elongation. Promotes stomatal closure. Regulates stomatal opening by integrating multiple signals via hydrogen peroxide H(2)O(2) homeostasis in guard cells in an ABA-independent manner. May contribute to basal defense mechanisms by closing stomata in the presence of bacterial pathogens. Regulates both hormone levels and ROS production in response to stress. Required for full immunity to bacterial pathogen and necrotrophic fungus.</text>
</comment>
<comment type="catalytic activity">
    <reaction>
        <text>ATP + protein L-histidine = ADP + protein N-phospho-L-histidine.</text>
        <dbReference type="EC" id="2.7.13.3"/>
    </reaction>
</comment>
<comment type="subunit">
    <text evidence="10">Interacts with AHP1, APH2, APH3, APH5 and APH6, but not with APH4.</text>
</comment>
<comment type="subcellular location">
    <subcellularLocation>
        <location evidence="7">Cell membrane</location>
        <topology evidence="7">Peripheral membrane protein</topology>
    </subcellularLocation>
    <subcellularLocation>
        <location evidence="7">Cytoplasm</location>
    </subcellularLocation>
</comment>
<comment type="tissue specificity">
    <text evidence="5 7">Present in light-grown but not in etiolated seedlings. Mostly expressed in roots flowers and siliques, and, to a lower extent, in stems and leaves, especially in guard cells.</text>
</comment>
<comment type="induction">
    <text evidence="7">By H(2)O(2).</text>
</comment>
<comment type="disruption phenotype">
    <text evidence="5 7 8">Hypersensitive to abscisic acid (ABA) and ethylene (ACC) in roots. Reduced stomatal closure in response to H(2)O(2), bacterial pathogen associated molecular pattern (PAMP) flagellin, Pseudomonas syringae, darkness, nitric oxide and ethylene, but normal closure in response to ABA and the peptide elf. Increased sensitivity to pathogens and increased tolerance to high salinity.</text>
</comment>
<comment type="sequence caution" evidence="11">
    <conflict type="erroneous gene model prediction">
        <sequence resource="EMBL-CDS" id="CAC08246"/>
    </conflict>
</comment>